<keyword id="KW-0131">Cell cycle</keyword>
<keyword id="KW-0132">Cell division</keyword>
<keyword id="KW-0997">Cell inner membrane</keyword>
<keyword id="KW-1003">Cell membrane</keyword>
<keyword id="KW-0133">Cell shape</keyword>
<keyword id="KW-0961">Cell wall biogenesis/degradation</keyword>
<keyword id="KW-0460">Magnesium</keyword>
<keyword id="KW-0472">Membrane</keyword>
<keyword id="KW-0479">Metal-binding</keyword>
<keyword id="KW-0573">Peptidoglycan synthesis</keyword>
<keyword id="KW-0808">Transferase</keyword>
<keyword id="KW-0812">Transmembrane</keyword>
<keyword id="KW-1133">Transmembrane helix</keyword>
<organism>
    <name type="scientific">Brucella ovis (strain ATCC 25840 / 63/290 / NCTC 10512)</name>
    <dbReference type="NCBI Taxonomy" id="444178"/>
    <lineage>
        <taxon>Bacteria</taxon>
        <taxon>Pseudomonadati</taxon>
        <taxon>Pseudomonadota</taxon>
        <taxon>Alphaproteobacteria</taxon>
        <taxon>Hyphomicrobiales</taxon>
        <taxon>Brucellaceae</taxon>
        <taxon>Brucella/Ochrobactrum group</taxon>
        <taxon>Brucella</taxon>
    </lineage>
</organism>
<comment type="function">
    <text evidence="1">Catalyzes the initial step of the lipid cycle reactions in the biosynthesis of the cell wall peptidoglycan: transfers peptidoglycan precursor phospho-MurNAc-pentapeptide from UDP-MurNAc-pentapeptide onto the lipid carrier undecaprenyl phosphate, yielding undecaprenyl-pyrophosphoryl-MurNAc-pentapeptide, known as lipid I.</text>
</comment>
<comment type="catalytic activity">
    <reaction evidence="1">
        <text>UDP-N-acetyl-alpha-D-muramoyl-L-alanyl-gamma-D-glutamyl-meso-2,6-diaminopimeloyl-D-alanyl-D-alanine + di-trans,octa-cis-undecaprenyl phosphate = di-trans,octa-cis-undecaprenyl diphospho-N-acetyl-alpha-D-muramoyl-L-alanyl-D-glutamyl-meso-2,6-diaminopimeloyl-D-alanyl-D-alanine + UMP</text>
        <dbReference type="Rhea" id="RHEA:28386"/>
        <dbReference type="ChEBI" id="CHEBI:57865"/>
        <dbReference type="ChEBI" id="CHEBI:60392"/>
        <dbReference type="ChEBI" id="CHEBI:61386"/>
        <dbReference type="ChEBI" id="CHEBI:61387"/>
        <dbReference type="EC" id="2.7.8.13"/>
    </reaction>
</comment>
<comment type="cofactor">
    <cofactor evidence="1">
        <name>Mg(2+)</name>
        <dbReference type="ChEBI" id="CHEBI:18420"/>
    </cofactor>
</comment>
<comment type="pathway">
    <text evidence="1">Cell wall biogenesis; peptidoglycan biosynthesis.</text>
</comment>
<comment type="subcellular location">
    <subcellularLocation>
        <location evidence="1">Cell inner membrane</location>
        <topology evidence="1">Multi-pass membrane protein</topology>
    </subcellularLocation>
</comment>
<comment type="similarity">
    <text evidence="1">Belongs to the glycosyltransferase 4 family. MraY subfamily.</text>
</comment>
<accession>A5VRI0</accession>
<protein>
    <recommendedName>
        <fullName evidence="1">Phospho-N-acetylmuramoyl-pentapeptide-transferase</fullName>
        <ecNumber evidence="1">2.7.8.13</ecNumber>
    </recommendedName>
    <alternativeName>
        <fullName evidence="1">UDP-MurNAc-pentapeptide phosphotransferase</fullName>
    </alternativeName>
</protein>
<name>MRAY_BRUO2</name>
<dbReference type="EC" id="2.7.8.13" evidence="1"/>
<dbReference type="EMBL" id="CP000708">
    <property type="protein sequence ID" value="ABQ60600.1"/>
    <property type="molecule type" value="Genomic_DNA"/>
</dbReference>
<dbReference type="RefSeq" id="WP_006013167.1">
    <property type="nucleotide sequence ID" value="NC_009505.1"/>
</dbReference>
<dbReference type="SMR" id="A5VRI0"/>
<dbReference type="GeneID" id="45124777"/>
<dbReference type="KEGG" id="bov:BOV_1391"/>
<dbReference type="HOGENOM" id="CLU_023982_0_0_5"/>
<dbReference type="PhylomeDB" id="A5VRI0"/>
<dbReference type="UniPathway" id="UPA00219"/>
<dbReference type="Proteomes" id="UP000006383">
    <property type="component" value="Chromosome I"/>
</dbReference>
<dbReference type="GO" id="GO:0005886">
    <property type="term" value="C:plasma membrane"/>
    <property type="evidence" value="ECO:0007669"/>
    <property type="project" value="UniProtKB-SubCell"/>
</dbReference>
<dbReference type="GO" id="GO:0046872">
    <property type="term" value="F:metal ion binding"/>
    <property type="evidence" value="ECO:0007669"/>
    <property type="project" value="UniProtKB-KW"/>
</dbReference>
<dbReference type="GO" id="GO:0008963">
    <property type="term" value="F:phospho-N-acetylmuramoyl-pentapeptide-transferase activity"/>
    <property type="evidence" value="ECO:0007669"/>
    <property type="project" value="UniProtKB-UniRule"/>
</dbReference>
<dbReference type="GO" id="GO:0051992">
    <property type="term" value="F:UDP-N-acetylmuramoyl-L-alanyl-D-glutamyl-meso-2,6-diaminopimelyl-D-alanyl-D-alanine:undecaprenyl-phosphate transferase activity"/>
    <property type="evidence" value="ECO:0007669"/>
    <property type="project" value="RHEA"/>
</dbReference>
<dbReference type="GO" id="GO:0051301">
    <property type="term" value="P:cell division"/>
    <property type="evidence" value="ECO:0007669"/>
    <property type="project" value="UniProtKB-KW"/>
</dbReference>
<dbReference type="GO" id="GO:0071555">
    <property type="term" value="P:cell wall organization"/>
    <property type="evidence" value="ECO:0007669"/>
    <property type="project" value="UniProtKB-KW"/>
</dbReference>
<dbReference type="GO" id="GO:0009252">
    <property type="term" value="P:peptidoglycan biosynthetic process"/>
    <property type="evidence" value="ECO:0007669"/>
    <property type="project" value="UniProtKB-UniRule"/>
</dbReference>
<dbReference type="GO" id="GO:0008360">
    <property type="term" value="P:regulation of cell shape"/>
    <property type="evidence" value="ECO:0007669"/>
    <property type="project" value="UniProtKB-KW"/>
</dbReference>
<dbReference type="CDD" id="cd06852">
    <property type="entry name" value="GT_MraY"/>
    <property type="match status" value="1"/>
</dbReference>
<dbReference type="HAMAP" id="MF_00038">
    <property type="entry name" value="MraY"/>
    <property type="match status" value="1"/>
</dbReference>
<dbReference type="InterPro" id="IPR000715">
    <property type="entry name" value="Glycosyl_transferase_4"/>
</dbReference>
<dbReference type="InterPro" id="IPR003524">
    <property type="entry name" value="PNAcMuramoyl-5peptid_Trfase"/>
</dbReference>
<dbReference type="InterPro" id="IPR018480">
    <property type="entry name" value="PNAcMuramoyl-5peptid_Trfase_CS"/>
</dbReference>
<dbReference type="NCBIfam" id="TIGR00445">
    <property type="entry name" value="mraY"/>
    <property type="match status" value="1"/>
</dbReference>
<dbReference type="PANTHER" id="PTHR22926">
    <property type="entry name" value="PHOSPHO-N-ACETYLMURAMOYL-PENTAPEPTIDE-TRANSFERASE"/>
    <property type="match status" value="1"/>
</dbReference>
<dbReference type="PANTHER" id="PTHR22926:SF5">
    <property type="entry name" value="PHOSPHO-N-ACETYLMURAMOYL-PENTAPEPTIDE-TRANSFERASE HOMOLOG"/>
    <property type="match status" value="1"/>
</dbReference>
<dbReference type="Pfam" id="PF00953">
    <property type="entry name" value="Glycos_transf_4"/>
    <property type="match status" value="1"/>
</dbReference>
<dbReference type="Pfam" id="PF10555">
    <property type="entry name" value="MraY_sig1"/>
    <property type="match status" value="1"/>
</dbReference>
<dbReference type="PROSITE" id="PS01347">
    <property type="entry name" value="MRAY_1"/>
    <property type="match status" value="1"/>
</dbReference>
<dbReference type="PROSITE" id="PS01348">
    <property type="entry name" value="MRAY_2"/>
    <property type="match status" value="1"/>
</dbReference>
<gene>
    <name evidence="1" type="primary">mraY</name>
    <name type="ordered locus">BOV_1391</name>
</gene>
<reference key="1">
    <citation type="journal article" date="2009" name="PLoS ONE">
        <title>Genome degradation in Brucella ovis corresponds with narrowing of its host range and tissue tropism.</title>
        <authorList>
            <person name="Tsolis R.M."/>
            <person name="Seshadri R."/>
            <person name="Santos R.L."/>
            <person name="Sangari F.J."/>
            <person name="Lobo J.M."/>
            <person name="de Jong M.F."/>
            <person name="Ren Q."/>
            <person name="Myers G."/>
            <person name="Brinkac L.M."/>
            <person name="Nelson W.C."/>
            <person name="Deboy R.T."/>
            <person name="Angiuoli S."/>
            <person name="Khouri H."/>
            <person name="Dimitrov G."/>
            <person name="Robinson J.R."/>
            <person name="Mulligan S."/>
            <person name="Walker R.L."/>
            <person name="Elzer P.E."/>
            <person name="Hassan K.A."/>
            <person name="Paulsen I.T."/>
        </authorList>
    </citation>
    <scope>NUCLEOTIDE SEQUENCE [LARGE SCALE GENOMIC DNA]</scope>
    <source>
        <strain>ATCC 25840 / 63/290 / NCTC 10512</strain>
    </source>
</reference>
<sequence length="360" mass="38761">MLMFLTHFAEHVTPFNVFRYITFRTGGAMITSALIVFLFGPTIINSLRVRQGKGQPIRADGPQTHFKKAGTPTMGGLMIMTGILASCLLWANLASVYVWVVLMVSVGFGAIGFYDDYLKVTKQSDKGFSGKARLGIEFLIAAIAAFTIMRAGQEPFSSSLTFPFVKQLVINLSWFFILFAAFVMVGAGNAVNLTDGLDGLAIVPVMVAAASFGFIAYLSGNAIFADYLQIHFVPGTGELAVVLGAVIGAGLGFLWFNAPPAAIFMGDTGSLALGGMLGTVAVATKHEIVLAIIGGLFVMEALSVIIQVGFFKMTGRRVFLMAPIHHHFEKKGWTESQVVIRFWIVAIILAMIGLSTLKLR</sequence>
<feature type="chain" id="PRO_1000002943" description="Phospho-N-acetylmuramoyl-pentapeptide-transferase">
    <location>
        <begin position="1"/>
        <end position="360"/>
    </location>
</feature>
<feature type="transmembrane region" description="Helical" evidence="1">
    <location>
        <begin position="27"/>
        <end position="47"/>
    </location>
</feature>
<feature type="transmembrane region" description="Helical" evidence="1">
    <location>
        <begin position="71"/>
        <end position="91"/>
    </location>
</feature>
<feature type="transmembrane region" description="Helical" evidence="1">
    <location>
        <begin position="93"/>
        <end position="113"/>
    </location>
</feature>
<feature type="transmembrane region" description="Helical" evidence="1">
    <location>
        <begin position="128"/>
        <end position="148"/>
    </location>
</feature>
<feature type="transmembrane region" description="Helical" evidence="1">
    <location>
        <begin position="168"/>
        <end position="188"/>
    </location>
</feature>
<feature type="transmembrane region" description="Helical" evidence="1">
    <location>
        <begin position="199"/>
        <end position="219"/>
    </location>
</feature>
<feature type="transmembrane region" description="Helical" evidence="1">
    <location>
        <begin position="239"/>
        <end position="259"/>
    </location>
</feature>
<feature type="transmembrane region" description="Helical" evidence="1">
    <location>
        <begin position="262"/>
        <end position="282"/>
    </location>
</feature>
<feature type="transmembrane region" description="Helical" evidence="1">
    <location>
        <begin position="288"/>
        <end position="308"/>
    </location>
</feature>
<feature type="transmembrane region" description="Helical" evidence="1">
    <location>
        <begin position="337"/>
        <end position="357"/>
    </location>
</feature>
<proteinExistence type="inferred from homology"/>
<evidence type="ECO:0000255" key="1">
    <source>
        <dbReference type="HAMAP-Rule" id="MF_00038"/>
    </source>
</evidence>